<feature type="chain" id="PRO_1000116708" description="Elongation factor Ts">
    <location>
        <begin position="1"/>
        <end position="288"/>
    </location>
</feature>
<feature type="region of interest" description="Involved in Mg(2+) ion dislocation from EF-Tu" evidence="1">
    <location>
        <begin position="82"/>
        <end position="85"/>
    </location>
</feature>
<evidence type="ECO:0000255" key="1">
    <source>
        <dbReference type="HAMAP-Rule" id="MF_00050"/>
    </source>
</evidence>
<reference key="1">
    <citation type="submission" date="2008-05" db="EMBL/GenBank/DDBJ databases">
        <title>Complete sequence of Chlorobium limicola DSM 245.</title>
        <authorList>
            <consortium name="US DOE Joint Genome Institute"/>
            <person name="Lucas S."/>
            <person name="Copeland A."/>
            <person name="Lapidus A."/>
            <person name="Glavina del Rio T."/>
            <person name="Dalin E."/>
            <person name="Tice H."/>
            <person name="Bruce D."/>
            <person name="Goodwin L."/>
            <person name="Pitluck S."/>
            <person name="Schmutz J."/>
            <person name="Larimer F."/>
            <person name="Land M."/>
            <person name="Hauser L."/>
            <person name="Kyrpides N."/>
            <person name="Ovchinnikova G."/>
            <person name="Zhao F."/>
            <person name="Li T."/>
            <person name="Liu Z."/>
            <person name="Overmann J."/>
            <person name="Bryant D.A."/>
            <person name="Richardson P."/>
        </authorList>
    </citation>
    <scope>NUCLEOTIDE SEQUENCE [LARGE SCALE GENOMIC DNA]</scope>
    <source>
        <strain>DSM 245 / NBRC 103803 / 6330</strain>
    </source>
</reference>
<gene>
    <name evidence="1" type="primary">tsf</name>
    <name type="ordered locus">Clim_0425</name>
</gene>
<proteinExistence type="inferred from homology"/>
<accession>B3EFY5</accession>
<sequence length="288" mass="31428">MSQISAKDVKDLRDITGVGMMDCKKALEESAGDMQKAIEYLRKKGAALAAKRAEKEAREGMVAIRLSEDRKAGVILELNCETDFVARGAVFTGFAGALTSLALDNAAASPEELLALSLGEEYGNEKVDDAMKTMTGRLGEKLELKRLALFLAPDGVVESYVHPGAQLGSLVQLATDKPEEAGVLARDIAMQVAAASPIVADRSAVPADYIEKEREIYRQQALGQGKPEQFVEKIVTGRLEKYYQEVVLTEQSFIKDGNIKVSDVLSDFRKKHQAQVDVKGFVRYQLGE</sequence>
<protein>
    <recommendedName>
        <fullName evidence="1">Elongation factor Ts</fullName>
        <shortName evidence="1">EF-Ts</shortName>
    </recommendedName>
</protein>
<dbReference type="EMBL" id="CP001097">
    <property type="protein sequence ID" value="ACD89518.1"/>
    <property type="molecule type" value="Genomic_DNA"/>
</dbReference>
<dbReference type="RefSeq" id="WP_012465399.1">
    <property type="nucleotide sequence ID" value="NC_010803.1"/>
</dbReference>
<dbReference type="SMR" id="B3EFY5"/>
<dbReference type="STRING" id="290315.Clim_0425"/>
<dbReference type="KEGG" id="cli:Clim_0425"/>
<dbReference type="eggNOG" id="COG0264">
    <property type="taxonomic scope" value="Bacteria"/>
</dbReference>
<dbReference type="HOGENOM" id="CLU_047155_0_0_10"/>
<dbReference type="OrthoDB" id="9808348at2"/>
<dbReference type="Proteomes" id="UP000008841">
    <property type="component" value="Chromosome"/>
</dbReference>
<dbReference type="GO" id="GO:0005737">
    <property type="term" value="C:cytoplasm"/>
    <property type="evidence" value="ECO:0007669"/>
    <property type="project" value="UniProtKB-SubCell"/>
</dbReference>
<dbReference type="GO" id="GO:0003746">
    <property type="term" value="F:translation elongation factor activity"/>
    <property type="evidence" value="ECO:0007669"/>
    <property type="project" value="UniProtKB-UniRule"/>
</dbReference>
<dbReference type="CDD" id="cd14275">
    <property type="entry name" value="UBA_EF-Ts"/>
    <property type="match status" value="1"/>
</dbReference>
<dbReference type="FunFam" id="1.10.286.20:FF:000001">
    <property type="entry name" value="Elongation factor Ts"/>
    <property type="match status" value="1"/>
</dbReference>
<dbReference type="FunFam" id="1.10.8.10:FF:000001">
    <property type="entry name" value="Elongation factor Ts"/>
    <property type="match status" value="1"/>
</dbReference>
<dbReference type="Gene3D" id="1.10.286.20">
    <property type="match status" value="1"/>
</dbReference>
<dbReference type="Gene3D" id="1.10.8.10">
    <property type="entry name" value="DNA helicase RuvA subunit, C-terminal domain"/>
    <property type="match status" value="1"/>
</dbReference>
<dbReference type="Gene3D" id="3.30.479.20">
    <property type="entry name" value="Elongation factor Ts, dimerisation domain"/>
    <property type="match status" value="2"/>
</dbReference>
<dbReference type="HAMAP" id="MF_00050">
    <property type="entry name" value="EF_Ts"/>
    <property type="match status" value="1"/>
</dbReference>
<dbReference type="InterPro" id="IPR036402">
    <property type="entry name" value="EF-Ts_dimer_sf"/>
</dbReference>
<dbReference type="InterPro" id="IPR001816">
    <property type="entry name" value="Transl_elong_EFTs/EF1B"/>
</dbReference>
<dbReference type="InterPro" id="IPR014039">
    <property type="entry name" value="Transl_elong_EFTs/EF1B_dimer"/>
</dbReference>
<dbReference type="InterPro" id="IPR018101">
    <property type="entry name" value="Transl_elong_Ts_CS"/>
</dbReference>
<dbReference type="InterPro" id="IPR009060">
    <property type="entry name" value="UBA-like_sf"/>
</dbReference>
<dbReference type="NCBIfam" id="TIGR00116">
    <property type="entry name" value="tsf"/>
    <property type="match status" value="1"/>
</dbReference>
<dbReference type="PANTHER" id="PTHR11741">
    <property type="entry name" value="ELONGATION FACTOR TS"/>
    <property type="match status" value="1"/>
</dbReference>
<dbReference type="PANTHER" id="PTHR11741:SF0">
    <property type="entry name" value="ELONGATION FACTOR TS, MITOCHONDRIAL"/>
    <property type="match status" value="1"/>
</dbReference>
<dbReference type="Pfam" id="PF00889">
    <property type="entry name" value="EF_TS"/>
    <property type="match status" value="1"/>
</dbReference>
<dbReference type="SUPFAM" id="SSF54713">
    <property type="entry name" value="Elongation factor Ts (EF-Ts), dimerisation domain"/>
    <property type="match status" value="2"/>
</dbReference>
<dbReference type="SUPFAM" id="SSF46934">
    <property type="entry name" value="UBA-like"/>
    <property type="match status" value="1"/>
</dbReference>
<dbReference type="PROSITE" id="PS01126">
    <property type="entry name" value="EF_TS_1"/>
    <property type="match status" value="1"/>
</dbReference>
<dbReference type="PROSITE" id="PS01127">
    <property type="entry name" value="EF_TS_2"/>
    <property type="match status" value="1"/>
</dbReference>
<comment type="function">
    <text evidence="1">Associates with the EF-Tu.GDP complex and induces the exchange of GDP to GTP. It remains bound to the aminoacyl-tRNA.EF-Tu.GTP complex up to the GTP hydrolysis stage on the ribosome.</text>
</comment>
<comment type="subcellular location">
    <subcellularLocation>
        <location evidence="1">Cytoplasm</location>
    </subcellularLocation>
</comment>
<comment type="similarity">
    <text evidence="1">Belongs to the EF-Ts family.</text>
</comment>
<organism>
    <name type="scientific">Chlorobium limicola (strain DSM 245 / NBRC 103803 / 6330)</name>
    <dbReference type="NCBI Taxonomy" id="290315"/>
    <lineage>
        <taxon>Bacteria</taxon>
        <taxon>Pseudomonadati</taxon>
        <taxon>Chlorobiota</taxon>
        <taxon>Chlorobiia</taxon>
        <taxon>Chlorobiales</taxon>
        <taxon>Chlorobiaceae</taxon>
        <taxon>Chlorobium/Pelodictyon group</taxon>
        <taxon>Chlorobium</taxon>
    </lineage>
</organism>
<keyword id="KW-0963">Cytoplasm</keyword>
<keyword id="KW-0251">Elongation factor</keyword>
<keyword id="KW-0648">Protein biosynthesis</keyword>
<name>EFTS_CHLL2</name>